<gene>
    <name evidence="1" type="primary">rplB</name>
    <name type="ordered locus">Swoo_4687</name>
</gene>
<dbReference type="EMBL" id="CP000961">
    <property type="protein sequence ID" value="ACA88937.1"/>
    <property type="molecule type" value="Genomic_DNA"/>
</dbReference>
<dbReference type="RefSeq" id="WP_012327257.1">
    <property type="nucleotide sequence ID" value="NC_010506.1"/>
</dbReference>
<dbReference type="SMR" id="B1KMY0"/>
<dbReference type="STRING" id="392500.Swoo_4687"/>
<dbReference type="KEGG" id="swd:Swoo_4687"/>
<dbReference type="eggNOG" id="COG0090">
    <property type="taxonomic scope" value="Bacteria"/>
</dbReference>
<dbReference type="HOGENOM" id="CLU_036235_2_1_6"/>
<dbReference type="Proteomes" id="UP000002168">
    <property type="component" value="Chromosome"/>
</dbReference>
<dbReference type="GO" id="GO:0015934">
    <property type="term" value="C:large ribosomal subunit"/>
    <property type="evidence" value="ECO:0007669"/>
    <property type="project" value="InterPro"/>
</dbReference>
<dbReference type="GO" id="GO:0019843">
    <property type="term" value="F:rRNA binding"/>
    <property type="evidence" value="ECO:0007669"/>
    <property type="project" value="UniProtKB-UniRule"/>
</dbReference>
<dbReference type="GO" id="GO:0003735">
    <property type="term" value="F:structural constituent of ribosome"/>
    <property type="evidence" value="ECO:0007669"/>
    <property type="project" value="InterPro"/>
</dbReference>
<dbReference type="GO" id="GO:0016740">
    <property type="term" value="F:transferase activity"/>
    <property type="evidence" value="ECO:0007669"/>
    <property type="project" value="InterPro"/>
</dbReference>
<dbReference type="GO" id="GO:0002181">
    <property type="term" value="P:cytoplasmic translation"/>
    <property type="evidence" value="ECO:0007669"/>
    <property type="project" value="TreeGrafter"/>
</dbReference>
<dbReference type="FunFam" id="2.30.30.30:FF:000001">
    <property type="entry name" value="50S ribosomal protein L2"/>
    <property type="match status" value="1"/>
</dbReference>
<dbReference type="FunFam" id="2.40.50.140:FF:000003">
    <property type="entry name" value="50S ribosomal protein L2"/>
    <property type="match status" value="1"/>
</dbReference>
<dbReference type="FunFam" id="4.10.950.10:FF:000001">
    <property type="entry name" value="50S ribosomal protein L2"/>
    <property type="match status" value="1"/>
</dbReference>
<dbReference type="Gene3D" id="2.30.30.30">
    <property type="match status" value="1"/>
</dbReference>
<dbReference type="Gene3D" id="2.40.50.140">
    <property type="entry name" value="Nucleic acid-binding proteins"/>
    <property type="match status" value="1"/>
</dbReference>
<dbReference type="Gene3D" id="4.10.950.10">
    <property type="entry name" value="Ribosomal protein L2, domain 3"/>
    <property type="match status" value="1"/>
</dbReference>
<dbReference type="HAMAP" id="MF_01320_B">
    <property type="entry name" value="Ribosomal_uL2_B"/>
    <property type="match status" value="1"/>
</dbReference>
<dbReference type="InterPro" id="IPR012340">
    <property type="entry name" value="NA-bd_OB-fold"/>
</dbReference>
<dbReference type="InterPro" id="IPR014722">
    <property type="entry name" value="Rib_uL2_dom2"/>
</dbReference>
<dbReference type="InterPro" id="IPR002171">
    <property type="entry name" value="Ribosomal_uL2"/>
</dbReference>
<dbReference type="InterPro" id="IPR005880">
    <property type="entry name" value="Ribosomal_uL2_bac/org-type"/>
</dbReference>
<dbReference type="InterPro" id="IPR022669">
    <property type="entry name" value="Ribosomal_uL2_C"/>
</dbReference>
<dbReference type="InterPro" id="IPR022671">
    <property type="entry name" value="Ribosomal_uL2_CS"/>
</dbReference>
<dbReference type="InterPro" id="IPR014726">
    <property type="entry name" value="Ribosomal_uL2_dom3"/>
</dbReference>
<dbReference type="InterPro" id="IPR022666">
    <property type="entry name" value="Ribosomal_uL2_RNA-bd_dom"/>
</dbReference>
<dbReference type="InterPro" id="IPR008991">
    <property type="entry name" value="Translation_prot_SH3-like_sf"/>
</dbReference>
<dbReference type="NCBIfam" id="TIGR01171">
    <property type="entry name" value="rplB_bact"/>
    <property type="match status" value="1"/>
</dbReference>
<dbReference type="PANTHER" id="PTHR13691:SF5">
    <property type="entry name" value="LARGE RIBOSOMAL SUBUNIT PROTEIN UL2M"/>
    <property type="match status" value="1"/>
</dbReference>
<dbReference type="PANTHER" id="PTHR13691">
    <property type="entry name" value="RIBOSOMAL PROTEIN L2"/>
    <property type="match status" value="1"/>
</dbReference>
<dbReference type="Pfam" id="PF00181">
    <property type="entry name" value="Ribosomal_L2"/>
    <property type="match status" value="1"/>
</dbReference>
<dbReference type="Pfam" id="PF03947">
    <property type="entry name" value="Ribosomal_L2_C"/>
    <property type="match status" value="1"/>
</dbReference>
<dbReference type="PIRSF" id="PIRSF002158">
    <property type="entry name" value="Ribosomal_L2"/>
    <property type="match status" value="1"/>
</dbReference>
<dbReference type="SMART" id="SM01383">
    <property type="entry name" value="Ribosomal_L2"/>
    <property type="match status" value="1"/>
</dbReference>
<dbReference type="SMART" id="SM01382">
    <property type="entry name" value="Ribosomal_L2_C"/>
    <property type="match status" value="1"/>
</dbReference>
<dbReference type="SUPFAM" id="SSF50249">
    <property type="entry name" value="Nucleic acid-binding proteins"/>
    <property type="match status" value="1"/>
</dbReference>
<dbReference type="SUPFAM" id="SSF50104">
    <property type="entry name" value="Translation proteins SH3-like domain"/>
    <property type="match status" value="1"/>
</dbReference>
<dbReference type="PROSITE" id="PS00467">
    <property type="entry name" value="RIBOSOMAL_L2"/>
    <property type="match status" value="1"/>
</dbReference>
<reference key="1">
    <citation type="submission" date="2008-02" db="EMBL/GenBank/DDBJ databases">
        <title>Complete sequence of Shewanella woodyi ATCC 51908.</title>
        <authorList>
            <consortium name="US DOE Joint Genome Institute"/>
            <person name="Copeland A."/>
            <person name="Lucas S."/>
            <person name="Lapidus A."/>
            <person name="Glavina del Rio T."/>
            <person name="Dalin E."/>
            <person name="Tice H."/>
            <person name="Bruce D."/>
            <person name="Goodwin L."/>
            <person name="Pitluck S."/>
            <person name="Sims D."/>
            <person name="Brettin T."/>
            <person name="Detter J.C."/>
            <person name="Han C."/>
            <person name="Kuske C.R."/>
            <person name="Schmutz J."/>
            <person name="Larimer F."/>
            <person name="Land M."/>
            <person name="Hauser L."/>
            <person name="Kyrpides N."/>
            <person name="Lykidis A."/>
            <person name="Zhao J.-S."/>
            <person name="Richardson P."/>
        </authorList>
    </citation>
    <scope>NUCLEOTIDE SEQUENCE [LARGE SCALE GENOMIC DNA]</scope>
    <source>
        <strain>ATCC 51908 / MS32</strain>
    </source>
</reference>
<accession>B1KMY0</accession>
<sequence length="275" mass="30093">MAIIKCKPTSAGRRHVVKVVNTDLHKGKPFAGLLAKKSKSGGRNNTGRITVRHVGGGHKQHYRIIDFKRIKDGIPAKVERLEYDPNRTANIALVLYADGERRYILAAKGMQAGDKIQSGIDAEIKVGNALPLRNIPVGSVVHAVEMKPGKGAQIARSAGTYVQVVARDGEYATLRLRSGEMRKVPVDCRATMGEVGNAEHMLRQLGKAGAKRWRGVRPTVRGVAMNPIDHPHGGGEGRTSGGRHPVSPWGVPTKGYKTRSNKRTDKYIVRRRNKK</sequence>
<keyword id="KW-1185">Reference proteome</keyword>
<keyword id="KW-0687">Ribonucleoprotein</keyword>
<keyword id="KW-0689">Ribosomal protein</keyword>
<keyword id="KW-0694">RNA-binding</keyword>
<keyword id="KW-0699">rRNA-binding</keyword>
<evidence type="ECO:0000255" key="1">
    <source>
        <dbReference type="HAMAP-Rule" id="MF_01320"/>
    </source>
</evidence>
<evidence type="ECO:0000256" key="2">
    <source>
        <dbReference type="SAM" id="MobiDB-lite"/>
    </source>
</evidence>
<evidence type="ECO:0000305" key="3"/>
<protein>
    <recommendedName>
        <fullName evidence="1">Large ribosomal subunit protein uL2</fullName>
    </recommendedName>
    <alternativeName>
        <fullName evidence="3">50S ribosomal protein L2</fullName>
    </alternativeName>
</protein>
<name>RL2_SHEWM</name>
<proteinExistence type="inferred from homology"/>
<organism>
    <name type="scientific">Shewanella woodyi (strain ATCC 51908 / MS32)</name>
    <dbReference type="NCBI Taxonomy" id="392500"/>
    <lineage>
        <taxon>Bacteria</taxon>
        <taxon>Pseudomonadati</taxon>
        <taxon>Pseudomonadota</taxon>
        <taxon>Gammaproteobacteria</taxon>
        <taxon>Alteromonadales</taxon>
        <taxon>Shewanellaceae</taxon>
        <taxon>Shewanella</taxon>
    </lineage>
</organism>
<comment type="function">
    <text evidence="1">One of the primary rRNA binding proteins. Required for association of the 30S and 50S subunits to form the 70S ribosome, for tRNA binding and peptide bond formation. It has been suggested to have peptidyltransferase activity; this is somewhat controversial. Makes several contacts with the 16S rRNA in the 70S ribosome.</text>
</comment>
<comment type="subunit">
    <text evidence="1">Part of the 50S ribosomal subunit. Forms a bridge to the 30S subunit in the 70S ribosome.</text>
</comment>
<comment type="similarity">
    <text evidence="1">Belongs to the universal ribosomal protein uL2 family.</text>
</comment>
<feature type="chain" id="PRO_1000141615" description="Large ribosomal subunit protein uL2">
    <location>
        <begin position="1"/>
        <end position="275"/>
    </location>
</feature>
<feature type="region of interest" description="Disordered" evidence="2">
    <location>
        <begin position="223"/>
        <end position="275"/>
    </location>
</feature>